<protein>
    <recommendedName>
        <fullName>V-type proton ATPase catalytic subunit A</fullName>
        <shortName>V-ATPase subunit A</shortName>
        <ecNumber evidence="2">7.1.2.2</ecNumber>
    </recommendedName>
    <alternativeName>
        <fullName>V-ATPase 69 kDa subunit</fullName>
    </alternativeName>
    <alternativeName>
        <fullName>Vacuolar H ATPase protein 13</fullName>
    </alternativeName>
    <alternativeName>
        <fullName>Vacuolar proton pump subunit alpha</fullName>
    </alternativeName>
</protein>
<accession>Q9XW92</accession>
<name>VATA_CAEEL</name>
<evidence type="ECO:0000250" key="1">
    <source>
        <dbReference type="UniProtKB" id="P31404"/>
    </source>
</evidence>
<evidence type="ECO:0000250" key="2">
    <source>
        <dbReference type="UniProtKB" id="P50516"/>
    </source>
</evidence>
<evidence type="ECO:0000255" key="3"/>
<evidence type="ECO:0000269" key="4">
    <source>
    </source>
</evidence>
<evidence type="ECO:0000269" key="5">
    <source>
    </source>
</evidence>
<evidence type="ECO:0000269" key="6">
    <source ref="2"/>
</evidence>
<evidence type="ECO:0000305" key="7"/>
<evidence type="ECO:0000312" key="8">
    <source>
        <dbReference type="EMBL" id="CAA22076.1"/>
    </source>
</evidence>
<evidence type="ECO:0000312" key="9">
    <source>
        <dbReference type="WormBase" id="Y49A3A.2"/>
    </source>
</evidence>
<organism>
    <name type="scientific">Caenorhabditis elegans</name>
    <dbReference type="NCBI Taxonomy" id="6239"/>
    <lineage>
        <taxon>Eukaryota</taxon>
        <taxon>Metazoa</taxon>
        <taxon>Ecdysozoa</taxon>
        <taxon>Nematoda</taxon>
        <taxon>Chromadorea</taxon>
        <taxon>Rhabditida</taxon>
        <taxon>Rhabditina</taxon>
        <taxon>Rhabditomorpha</taxon>
        <taxon>Rhabditoidea</taxon>
        <taxon>Rhabditidae</taxon>
        <taxon>Peloderinae</taxon>
        <taxon>Caenorhabditis</taxon>
    </lineage>
</organism>
<gene>
    <name evidence="9" type="primary">vha-13</name>
    <name evidence="9" type="ORF">Y49A3A.2</name>
</gene>
<dbReference type="EC" id="7.1.2.2" evidence="2"/>
<dbReference type="EMBL" id="BX284605">
    <property type="protein sequence ID" value="CAA22076.1"/>
    <property type="molecule type" value="Genomic_DNA"/>
</dbReference>
<dbReference type="PIR" id="T27035">
    <property type="entry name" value="T27035"/>
</dbReference>
<dbReference type="RefSeq" id="NP_506559.1">
    <property type="nucleotide sequence ID" value="NM_074158.8"/>
</dbReference>
<dbReference type="SMR" id="Q9XW92"/>
<dbReference type="BioGRID" id="532288">
    <property type="interactions" value="24"/>
</dbReference>
<dbReference type="FunCoup" id="Q9XW92">
    <property type="interactions" value="3079"/>
</dbReference>
<dbReference type="STRING" id="6239.Y49A3A.2.4"/>
<dbReference type="TCDB" id="3.A.2.2.7">
    <property type="family name" value="the h+- or na+-translocating f-type, v-type and a-type atpase (f-atpase) superfamily"/>
</dbReference>
<dbReference type="iPTMnet" id="Q9XW92"/>
<dbReference type="PaxDb" id="6239-Y49A3A.2.3"/>
<dbReference type="PeptideAtlas" id="Q9XW92"/>
<dbReference type="EnsemblMetazoa" id="Y49A3A.2.1">
    <property type="protein sequence ID" value="Y49A3A.2.1"/>
    <property type="gene ID" value="WBGene00013025"/>
</dbReference>
<dbReference type="GeneID" id="3564970"/>
<dbReference type="KEGG" id="cel:CELE_Y49A3A.2"/>
<dbReference type="UCSC" id="Y49A3A.2.2">
    <property type="organism name" value="c. elegans"/>
</dbReference>
<dbReference type="AGR" id="WB:WBGene00013025"/>
<dbReference type="CTD" id="3564970"/>
<dbReference type="WormBase" id="Y49A3A.2">
    <property type="protein sequence ID" value="CE22210"/>
    <property type="gene ID" value="WBGene00013025"/>
    <property type="gene designation" value="vha-13"/>
</dbReference>
<dbReference type="eggNOG" id="KOG1352">
    <property type="taxonomic scope" value="Eukaryota"/>
</dbReference>
<dbReference type="GeneTree" id="ENSGT00550000074787"/>
<dbReference type="HOGENOM" id="CLU_008162_3_1_1"/>
<dbReference type="InParanoid" id="Q9XW92"/>
<dbReference type="OMA" id="RIVKTFW"/>
<dbReference type="OrthoDB" id="1676488at2759"/>
<dbReference type="PhylomeDB" id="Q9XW92"/>
<dbReference type="Reactome" id="R-CEL-1222556">
    <property type="pathway name" value="ROS and RNS production in phagocytes"/>
</dbReference>
<dbReference type="Reactome" id="R-CEL-77387">
    <property type="pathway name" value="Insulin receptor recycling"/>
</dbReference>
<dbReference type="Reactome" id="R-CEL-917977">
    <property type="pathway name" value="Transferrin endocytosis and recycling"/>
</dbReference>
<dbReference type="Reactome" id="R-CEL-9639288">
    <property type="pathway name" value="Amino acids regulate mTORC1"/>
</dbReference>
<dbReference type="Reactome" id="R-CEL-983712">
    <property type="pathway name" value="Ion channel transport"/>
</dbReference>
<dbReference type="PRO" id="PR:Q9XW92"/>
<dbReference type="Proteomes" id="UP000001940">
    <property type="component" value="Chromosome V"/>
</dbReference>
<dbReference type="Bgee" id="WBGene00013025">
    <property type="expression patterns" value="Expressed in larva and 4 other cell types or tissues"/>
</dbReference>
<dbReference type="GO" id="GO:0033180">
    <property type="term" value="C:proton-transporting V-type ATPase, V1 domain"/>
    <property type="evidence" value="ECO:0007669"/>
    <property type="project" value="InterPro"/>
</dbReference>
<dbReference type="GO" id="GO:0005524">
    <property type="term" value="F:ATP binding"/>
    <property type="evidence" value="ECO:0007669"/>
    <property type="project" value="UniProtKB-KW"/>
</dbReference>
<dbReference type="GO" id="GO:0016887">
    <property type="term" value="F:ATP hydrolysis activity"/>
    <property type="evidence" value="ECO:0007669"/>
    <property type="project" value="InterPro"/>
</dbReference>
<dbReference type="GO" id="GO:0046961">
    <property type="term" value="F:proton-transporting ATPase activity, rotational mechanism"/>
    <property type="evidence" value="ECO:0000318"/>
    <property type="project" value="GO_Central"/>
</dbReference>
<dbReference type="GO" id="GO:0046034">
    <property type="term" value="P:ATP metabolic process"/>
    <property type="evidence" value="ECO:0007669"/>
    <property type="project" value="InterPro"/>
</dbReference>
<dbReference type="GO" id="GO:0007042">
    <property type="term" value="P:lysosomal lumen acidification"/>
    <property type="evidence" value="ECO:0000315"/>
    <property type="project" value="UniProtKB"/>
</dbReference>
<dbReference type="GO" id="GO:1902600">
    <property type="term" value="P:proton transmembrane transport"/>
    <property type="evidence" value="ECO:0000318"/>
    <property type="project" value="GO_Central"/>
</dbReference>
<dbReference type="CDD" id="cd18111">
    <property type="entry name" value="ATP-synt_V_A-type_alpha_C"/>
    <property type="match status" value="1"/>
</dbReference>
<dbReference type="CDD" id="cd18119">
    <property type="entry name" value="ATP-synt_V_A-type_alpha_N"/>
    <property type="match status" value="1"/>
</dbReference>
<dbReference type="CDD" id="cd01134">
    <property type="entry name" value="V_A-ATPase_A"/>
    <property type="match status" value="1"/>
</dbReference>
<dbReference type="FunFam" id="1.10.1140.10:FF:000002">
    <property type="entry name" value="V-type proton ATPase catalytic subunit A"/>
    <property type="match status" value="1"/>
</dbReference>
<dbReference type="FunFam" id="2.40.30.20:FF:000002">
    <property type="entry name" value="V-type proton ATPase catalytic subunit A"/>
    <property type="match status" value="1"/>
</dbReference>
<dbReference type="FunFam" id="2.40.50.100:FF:000008">
    <property type="entry name" value="V-type proton ATPase catalytic subunit A"/>
    <property type="match status" value="1"/>
</dbReference>
<dbReference type="FunFam" id="3.40.50.300:FF:000052">
    <property type="entry name" value="V-type proton ATPase catalytic subunit A"/>
    <property type="match status" value="1"/>
</dbReference>
<dbReference type="Gene3D" id="2.40.30.20">
    <property type="match status" value="1"/>
</dbReference>
<dbReference type="Gene3D" id="2.40.50.100">
    <property type="match status" value="1"/>
</dbReference>
<dbReference type="Gene3D" id="1.10.1140.10">
    <property type="entry name" value="Bovine Mitochondrial F1-atpase, Atp Synthase Beta Chain, Chain D, domain 3"/>
    <property type="match status" value="1"/>
</dbReference>
<dbReference type="Gene3D" id="3.40.50.300">
    <property type="entry name" value="P-loop containing nucleotide triphosphate hydrolases"/>
    <property type="match status" value="1"/>
</dbReference>
<dbReference type="HAMAP" id="MF_00309">
    <property type="entry name" value="ATP_synth_A_arch"/>
    <property type="match status" value="1"/>
</dbReference>
<dbReference type="InterPro" id="IPR055190">
    <property type="entry name" value="ATP-synt_VA_C"/>
</dbReference>
<dbReference type="InterPro" id="IPR031686">
    <property type="entry name" value="ATP-synth_a_Xtn"/>
</dbReference>
<dbReference type="InterPro" id="IPR023366">
    <property type="entry name" value="ATP_synth_asu-like_sf"/>
</dbReference>
<dbReference type="InterPro" id="IPR020003">
    <property type="entry name" value="ATPase_a/bsu_AS"/>
</dbReference>
<dbReference type="InterPro" id="IPR004100">
    <property type="entry name" value="ATPase_F1/V1/A1_a/bsu_N"/>
</dbReference>
<dbReference type="InterPro" id="IPR036121">
    <property type="entry name" value="ATPase_F1/V1/A1_a/bsu_N_sf"/>
</dbReference>
<dbReference type="InterPro" id="IPR000194">
    <property type="entry name" value="ATPase_F1/V1/A1_a/bsu_nucl-bd"/>
</dbReference>
<dbReference type="InterPro" id="IPR024034">
    <property type="entry name" value="ATPase_F1/V1_b/a_C"/>
</dbReference>
<dbReference type="InterPro" id="IPR005725">
    <property type="entry name" value="ATPase_V1-cplx_asu"/>
</dbReference>
<dbReference type="InterPro" id="IPR027417">
    <property type="entry name" value="P-loop_NTPase"/>
</dbReference>
<dbReference type="InterPro" id="IPR022878">
    <property type="entry name" value="V-ATPase_asu"/>
</dbReference>
<dbReference type="NCBIfam" id="NF003220">
    <property type="entry name" value="PRK04192.1"/>
    <property type="match status" value="1"/>
</dbReference>
<dbReference type="NCBIfam" id="TIGR01042">
    <property type="entry name" value="V-ATPase_V1_A"/>
    <property type="match status" value="1"/>
</dbReference>
<dbReference type="PANTHER" id="PTHR43607:SF1">
    <property type="entry name" value="H(+)-TRANSPORTING TWO-SECTOR ATPASE"/>
    <property type="match status" value="1"/>
</dbReference>
<dbReference type="PANTHER" id="PTHR43607">
    <property type="entry name" value="V-TYPE PROTON ATPASE CATALYTIC SUBUNIT A"/>
    <property type="match status" value="1"/>
</dbReference>
<dbReference type="Pfam" id="PF00006">
    <property type="entry name" value="ATP-synt_ab"/>
    <property type="match status" value="1"/>
</dbReference>
<dbReference type="Pfam" id="PF02874">
    <property type="entry name" value="ATP-synt_ab_N"/>
    <property type="match status" value="1"/>
</dbReference>
<dbReference type="Pfam" id="PF16886">
    <property type="entry name" value="ATP-synt_ab_Xtn"/>
    <property type="match status" value="1"/>
</dbReference>
<dbReference type="Pfam" id="PF22919">
    <property type="entry name" value="ATP-synt_VA_C"/>
    <property type="match status" value="1"/>
</dbReference>
<dbReference type="SUPFAM" id="SSF47917">
    <property type="entry name" value="C-terminal domain of alpha and beta subunits of F1 ATP synthase"/>
    <property type="match status" value="1"/>
</dbReference>
<dbReference type="SUPFAM" id="SSF50615">
    <property type="entry name" value="N-terminal domain of alpha and beta subunits of F1 ATP synthase"/>
    <property type="match status" value="1"/>
</dbReference>
<dbReference type="SUPFAM" id="SSF52540">
    <property type="entry name" value="P-loop containing nucleoside triphosphate hydrolases"/>
    <property type="match status" value="1"/>
</dbReference>
<dbReference type="PROSITE" id="PS00152">
    <property type="entry name" value="ATPASE_ALPHA_BETA"/>
    <property type="match status" value="1"/>
</dbReference>
<feature type="initiator methionine" description="Removed" evidence="6">
    <location>
        <position position="1"/>
    </location>
</feature>
<feature type="chain" id="PRO_0000232903" description="V-type proton ATPase catalytic subunit A">
    <location>
        <begin position="2"/>
        <end position="606"/>
    </location>
</feature>
<feature type="binding site" evidence="3">
    <location>
        <begin position="240"/>
        <end position="247"/>
    </location>
    <ligand>
        <name>ATP</name>
        <dbReference type="ChEBI" id="CHEBI:30616"/>
    </ligand>
</feature>
<feature type="modified residue" description="N-acetylalanine" evidence="6">
    <location>
        <position position="2"/>
    </location>
</feature>
<comment type="function">
    <text evidence="1 4 5 7">Catalytic subunit of the V1 complex of vacuolar(H+)-ATPase (V-ATPase), a multisubunit enzyme composed of a peripheral complex (V1) that hydrolyzes ATP and a membrane integral complex (V0) that translocates protons (By similarity). V-ATPase is responsible for acidifying and maintaining the pH of intracellular compartments and in some cell types, is targeted to the plasma membrane, where it is responsible for acidifying the extracellular environment (By similarity). Required along with other vacuolar ATPase components for the removal of protein aggregates which form in immature oocytes in the distal gonad (PubMed:29168500). This removal occurs as the oocytes mature and move to the proximal gonad, is triggered by the introduction of sperm through mating and occurs before fertilization (PubMed:29168500). The introduction of sperm triggers V-ATPase accumulation in proximal oocytes and induces lysosomal acidification which leads to engulfing of protein aggregates by lysosomes and subsequent clearance of the aggregates (PubMed:29168500). Lysosomal acidification also leads to changes in mitochondrial morphology and function (PubMed:29168500). Mitochondria in distal immature oocytes are fragmented, produce high levels of reactive oxygen species (ROS) and have high membrane potential, indicative of metabolic inactivity (PubMed:29168500). In contrast, mitochondria in proximal mature oocytes are tubular with lower ROS levels and membrane potential, indicative of an active metabolic state required for aggregate mobilization before clearance (PubMed:29168500). Involved in receptor-mediated endocytosis (PubMed:16785323).</text>
</comment>
<comment type="catalytic activity">
    <reaction evidence="2">
        <text>ATP + H2O + 4 H(+)(in) = ADP + phosphate + 5 H(+)(out)</text>
        <dbReference type="Rhea" id="RHEA:57720"/>
        <dbReference type="ChEBI" id="CHEBI:15377"/>
        <dbReference type="ChEBI" id="CHEBI:15378"/>
        <dbReference type="ChEBI" id="CHEBI:30616"/>
        <dbReference type="ChEBI" id="CHEBI:43474"/>
        <dbReference type="ChEBI" id="CHEBI:456216"/>
        <dbReference type="EC" id="7.1.2.2"/>
    </reaction>
</comment>
<comment type="activity regulation">
    <text evidence="1">ATP hydrolysis occurs at the interface between the nucleotide-binding domains of subunits A and B (By similarity). ATP hydrolysis triggers a conformational change in the subunits D and F, which induces a shift of subunit d (By similarity). The c-ring is subsequently rotated and results in a continuous proton translocation across the membrane (By similarity).</text>
</comment>
<comment type="subunit">
    <text evidence="1">V-ATPase is a heteromultimeric enzyme made up of two complexes: the ATP-hydrolytic V1 complex and the proton translocation V0 complex (By similarity). The V1 complex consists of three catalytic AB heterodimers that form a heterohexamer, three peripheral stalks each consisting of EG heterodimers, one central rotor including subunits D and F, and the regulatory subunits C and H (By similarity). The proton translocation complex V0 consists of the proton transport subunit a, a ring of proteolipid subunits c9c'', rotary subunit d, subunits e and f, and the accessory subunits vah-19/Ac45 and vah-20/PRR (By similarity).</text>
</comment>
<comment type="tissue specificity">
    <text evidence="5">Expressed in proximal but not distal germ cells.</text>
</comment>
<comment type="disruption phenotype">
    <text evidence="4 5">RNAi-mediated knockdown causes larval lethality (PubMed:16785323). Results in increased protein aggregation in the oocytes of sperm-deficient young adult females which is not eliminated by mating (PubMed:29168500). Impaired yolk uptake by the oocytes from the pseudoceolomic cavities (PubMed:16785323). Causes an increase in the section of the excretory canal, which often has multiple lumens and abnormal whorls (PubMed:16785323). Does not affect alae formation in larvae (PubMed:16785323).</text>
</comment>
<comment type="similarity">
    <text evidence="3">Belongs to the ATPase alpha/beta chains family.</text>
</comment>
<proteinExistence type="evidence at protein level"/>
<keyword id="KW-0007">Acetylation</keyword>
<keyword id="KW-0067">ATP-binding</keyword>
<keyword id="KW-0903">Direct protein sequencing</keyword>
<keyword id="KW-0375">Hydrogen ion transport</keyword>
<keyword id="KW-0406">Ion transport</keyword>
<keyword id="KW-0547">Nucleotide-binding</keyword>
<keyword id="KW-1185">Reference proteome</keyword>
<keyword id="KW-1278">Translocase</keyword>
<keyword id="KW-0813">Transport</keyword>
<reference evidence="8" key="1">
    <citation type="journal article" date="1998" name="Science">
        <title>Genome sequence of the nematode C. elegans: a platform for investigating biology.</title>
        <authorList>
            <consortium name="The C. elegans sequencing consortium"/>
        </authorList>
    </citation>
    <scope>NUCLEOTIDE SEQUENCE [LARGE SCALE GENOMIC DNA]</scope>
    <source>
        <strain evidence="8">Bristol N2</strain>
    </source>
</reference>
<reference key="2">
    <citation type="submission" date="2006-04" db="UniProtKB">
        <authorList>
            <person name="Bienvenut W.V."/>
        </authorList>
    </citation>
    <scope>PROTEIN SEQUENCE OF 2-33; 97-118; 122-128; 132-152; 192-201; 246-254; 371-377; 449-465; 503-516; 532-541 AND 554-574</scope>
    <scope>ACETYLATION AT ALA-2</scope>
</reference>
<reference key="3">
    <citation type="journal article" date="2006" name="J. Cell Biol.">
        <title>The V0-ATPase mediates apical secretion of exosomes containing Hedgehog-related proteins in Caenorhabditis elegans.</title>
        <authorList>
            <person name="Liegeois S."/>
            <person name="Benedetto A."/>
            <person name="Garnier J.M."/>
            <person name="Schwab Y."/>
            <person name="Labouesse M."/>
        </authorList>
    </citation>
    <scope>FUNCTION</scope>
    <scope>DISRUPTION PHENOTYPE</scope>
</reference>
<reference key="4">
    <citation type="journal article" date="2017" name="Nature">
        <title>A lysosomal switch triggers proteostasis renewal in the immortal C. elegans germ lineage.</title>
        <authorList>
            <person name="Bohnert K.A."/>
            <person name="Kenyon C."/>
        </authorList>
    </citation>
    <scope>FUNCTION</scope>
    <scope>TISSUE SPECIFICITY</scope>
    <scope>DISRUPTION PHENOTYPE</scope>
</reference>
<sequence>MAAESSYGFVYGVSGPVVTAEKMAGSAMYELVRVGHQELVGEIIRLEGDYATIQVYEETSGVTIGDPVLRTGKPLSVELGPGIMGSIFDGIQRPLKDIADITQSIYIPKGVSTNALSREARWDFVVSKDLRVGGHVTGGDIIGTVDENLLIKHKILLPPSACGTITFVAPSGQYTVEDTLLELEFAGRKQKFSMLQIWPVRSPRPVTEKLAANNPLLCGQRVLDALFPCVQGGTTAIPGAFGCGKTVISQSLSKYSNSDAIIYVGCGERGNEMSEVLRDFPELTMEVEGVTTSIMKRTALVANTSNMPVAAREASIYTGITLAEYFRDMGLNVAMMADSTSRWAEALREISGRLGEMPADSGYPAYLAARLASFYERAGRVKCLGSPEREGSVTIVGAVSPPGGDFADPVTSATLGIVQVFWGLDKKLAQRKHFPSINWLISYSEYMRALEEFYEKNYPEFVSLRTKCKEILQEEEDLSEIVQLVGKASLAESDKVTLEVAKIIKDDFLQQNGYTKYDRFCPFYKTVGMLKNMIGFYDLARHAVEATAQSDNKITWNVIKDSMGDLIYQLSAMKFKDPVADGEAKIRKDYEDLAEAMANAFRNLED</sequence>